<reference key="1">
    <citation type="journal article" date="2005" name="Genome Res.">
        <title>Genome sequence of Blochmannia pennsylvanicus indicates parallel evolutionary trends among bacterial mutualists of insects.</title>
        <authorList>
            <person name="Degnan P.H."/>
            <person name="Lazarus A.B."/>
            <person name="Wernegreen J.J."/>
        </authorList>
    </citation>
    <scope>NUCLEOTIDE SEQUENCE [LARGE SCALE GENOMIC DNA]</scope>
    <source>
        <strain>BPEN</strain>
    </source>
</reference>
<name>EFTS_BLOPB</name>
<accession>Q493D1</accession>
<gene>
    <name evidence="1" type="primary">tsf</name>
    <name type="ordered locus">BPEN_280</name>
</gene>
<proteinExistence type="inferred from homology"/>
<comment type="function">
    <text evidence="1">Associates with the EF-Tu.GDP complex and induces the exchange of GDP to GTP. It remains bound to the aminoacyl-tRNA.EF-Tu.GTP complex up to the GTP hydrolysis stage on the ribosome.</text>
</comment>
<comment type="subcellular location">
    <subcellularLocation>
        <location evidence="1">Cytoplasm</location>
    </subcellularLocation>
</comment>
<comment type="similarity">
    <text evidence="1">Belongs to the EF-Ts family.</text>
</comment>
<dbReference type="EMBL" id="CP000016">
    <property type="protein sequence ID" value="AAZ40911.1"/>
    <property type="molecule type" value="Genomic_DNA"/>
</dbReference>
<dbReference type="RefSeq" id="WP_011282818.1">
    <property type="nucleotide sequence ID" value="NC_007292.1"/>
</dbReference>
<dbReference type="SMR" id="Q493D1"/>
<dbReference type="STRING" id="291272.BPEN_280"/>
<dbReference type="KEGG" id="bpn:BPEN_280"/>
<dbReference type="eggNOG" id="COG0264">
    <property type="taxonomic scope" value="Bacteria"/>
</dbReference>
<dbReference type="HOGENOM" id="CLU_047155_0_2_6"/>
<dbReference type="OrthoDB" id="9808348at2"/>
<dbReference type="Proteomes" id="UP000007794">
    <property type="component" value="Chromosome"/>
</dbReference>
<dbReference type="GO" id="GO:0005737">
    <property type="term" value="C:cytoplasm"/>
    <property type="evidence" value="ECO:0007669"/>
    <property type="project" value="UniProtKB-SubCell"/>
</dbReference>
<dbReference type="GO" id="GO:0003746">
    <property type="term" value="F:translation elongation factor activity"/>
    <property type="evidence" value="ECO:0007669"/>
    <property type="project" value="UniProtKB-UniRule"/>
</dbReference>
<dbReference type="CDD" id="cd14275">
    <property type="entry name" value="UBA_EF-Ts"/>
    <property type="match status" value="1"/>
</dbReference>
<dbReference type="FunFam" id="1.10.8.10:FF:000001">
    <property type="entry name" value="Elongation factor Ts"/>
    <property type="match status" value="1"/>
</dbReference>
<dbReference type="FunFam" id="3.30.479.20:FF:000001">
    <property type="entry name" value="Elongation factor Ts"/>
    <property type="match status" value="1"/>
</dbReference>
<dbReference type="Gene3D" id="1.10.286.20">
    <property type="match status" value="1"/>
</dbReference>
<dbReference type="Gene3D" id="1.10.8.10">
    <property type="entry name" value="DNA helicase RuvA subunit, C-terminal domain"/>
    <property type="match status" value="1"/>
</dbReference>
<dbReference type="Gene3D" id="3.30.479.20">
    <property type="entry name" value="Elongation factor Ts, dimerisation domain"/>
    <property type="match status" value="2"/>
</dbReference>
<dbReference type="HAMAP" id="MF_00050">
    <property type="entry name" value="EF_Ts"/>
    <property type="match status" value="1"/>
</dbReference>
<dbReference type="InterPro" id="IPR036402">
    <property type="entry name" value="EF-Ts_dimer_sf"/>
</dbReference>
<dbReference type="InterPro" id="IPR001816">
    <property type="entry name" value="Transl_elong_EFTs/EF1B"/>
</dbReference>
<dbReference type="InterPro" id="IPR014039">
    <property type="entry name" value="Transl_elong_EFTs/EF1B_dimer"/>
</dbReference>
<dbReference type="InterPro" id="IPR018101">
    <property type="entry name" value="Transl_elong_Ts_CS"/>
</dbReference>
<dbReference type="InterPro" id="IPR009060">
    <property type="entry name" value="UBA-like_sf"/>
</dbReference>
<dbReference type="NCBIfam" id="TIGR00116">
    <property type="entry name" value="tsf"/>
    <property type="match status" value="1"/>
</dbReference>
<dbReference type="PANTHER" id="PTHR11741">
    <property type="entry name" value="ELONGATION FACTOR TS"/>
    <property type="match status" value="1"/>
</dbReference>
<dbReference type="PANTHER" id="PTHR11741:SF0">
    <property type="entry name" value="ELONGATION FACTOR TS, MITOCHONDRIAL"/>
    <property type="match status" value="1"/>
</dbReference>
<dbReference type="Pfam" id="PF00889">
    <property type="entry name" value="EF_TS"/>
    <property type="match status" value="1"/>
</dbReference>
<dbReference type="SUPFAM" id="SSF54713">
    <property type="entry name" value="Elongation factor Ts (EF-Ts), dimerisation domain"/>
    <property type="match status" value="1"/>
</dbReference>
<dbReference type="SUPFAM" id="SSF46934">
    <property type="entry name" value="UBA-like"/>
    <property type="match status" value="1"/>
</dbReference>
<dbReference type="PROSITE" id="PS01126">
    <property type="entry name" value="EF_TS_1"/>
    <property type="match status" value="1"/>
</dbReference>
<dbReference type="PROSITE" id="PS01127">
    <property type="entry name" value="EF_TS_2"/>
    <property type="match status" value="1"/>
</dbReference>
<evidence type="ECO:0000255" key="1">
    <source>
        <dbReference type="HAMAP-Rule" id="MF_00050"/>
    </source>
</evidence>
<protein>
    <recommendedName>
        <fullName evidence="1">Elongation factor Ts</fullName>
        <shortName evidence="1">EF-Ts</shortName>
    </recommendedName>
</protein>
<feature type="chain" id="PRO_0000241463" description="Elongation factor Ts">
    <location>
        <begin position="1"/>
        <end position="272"/>
    </location>
</feature>
<feature type="region of interest" description="Involved in Mg(2+) ion dislocation from EF-Tu" evidence="1">
    <location>
        <begin position="86"/>
        <end position="89"/>
    </location>
</feature>
<organism>
    <name type="scientific">Blochmanniella pennsylvanica (strain BPEN)</name>
    <dbReference type="NCBI Taxonomy" id="291272"/>
    <lineage>
        <taxon>Bacteria</taxon>
        <taxon>Pseudomonadati</taxon>
        <taxon>Pseudomonadota</taxon>
        <taxon>Gammaproteobacteria</taxon>
        <taxon>Enterobacterales</taxon>
        <taxon>Enterobacteriaceae</taxon>
        <taxon>ant endosymbionts</taxon>
        <taxon>Candidatus Blochmanniella</taxon>
    </lineage>
</organism>
<keyword id="KW-0963">Cytoplasm</keyword>
<keyword id="KW-0251">Elongation factor</keyword>
<keyword id="KW-0648">Protein biosynthesis</keyword>
<keyword id="KW-1185">Reference proteome</keyword>
<sequence>MKEKIININSDLIKELRKRTSIGVVECKQALIKANGDLELAIDNMRRSGLKTACKKSGHITSSGLIAVEITSNKQYGIMIEINCETDFVAKDSTFQEFAKTVIITALNEKIHDINILQTRFKEQRTNLIAQVGENINIRRFVVLTGDFLGCYVHGFKIGVIVAASGNVTADLMKHISMHIAAKNPKYINVNDVPRNVIIRENNIQMDIAMKSGKSYKISEKITAGRMSKFFNDIVLTKQNFIMDINKTVEELLIEYHIKINNFARFELGEDM</sequence>